<keyword id="KW-0119">Carbohydrate metabolism</keyword>
<keyword id="KW-0320">Glycogen biosynthesis</keyword>
<keyword id="KW-0321">Glycogen metabolism</keyword>
<keyword id="KW-0328">Glycosyltransferase</keyword>
<keyword id="KW-0808">Transferase</keyword>
<reference key="1">
    <citation type="submission" date="2007-03" db="EMBL/GenBank/DDBJ databases">
        <title>Complete sequence of chromosome 3 of Burkholderia vietnamiensis G4.</title>
        <authorList>
            <consortium name="US DOE Joint Genome Institute"/>
            <person name="Copeland A."/>
            <person name="Lucas S."/>
            <person name="Lapidus A."/>
            <person name="Barry K."/>
            <person name="Detter J.C."/>
            <person name="Glavina del Rio T."/>
            <person name="Hammon N."/>
            <person name="Israni S."/>
            <person name="Dalin E."/>
            <person name="Tice H."/>
            <person name="Pitluck S."/>
            <person name="Chain P."/>
            <person name="Malfatti S."/>
            <person name="Shin M."/>
            <person name="Vergez L."/>
            <person name="Schmutz J."/>
            <person name="Larimer F."/>
            <person name="Land M."/>
            <person name="Hauser L."/>
            <person name="Kyrpides N."/>
            <person name="Tiedje J."/>
            <person name="Richardson P."/>
        </authorList>
    </citation>
    <scope>NUCLEOTIDE SEQUENCE [LARGE SCALE GENOMIC DNA]</scope>
    <source>
        <strain>G4 / LMG 22486</strain>
    </source>
</reference>
<gene>
    <name evidence="1" type="primary">glgB</name>
    <name type="ordered locus">Bcep1808_5812</name>
</gene>
<protein>
    <recommendedName>
        <fullName evidence="1">1,4-alpha-glucan branching enzyme GlgB</fullName>
        <ecNumber evidence="1">2.4.1.18</ecNumber>
    </recommendedName>
    <alternativeName>
        <fullName evidence="1">1,4-alpha-D-glucan:1,4-alpha-D-glucan 6-glucosyl-transferase</fullName>
    </alternativeName>
    <alternativeName>
        <fullName evidence="1">Alpha-(1-&gt;4)-glucan branching enzyme</fullName>
    </alternativeName>
    <alternativeName>
        <fullName evidence="1">Glycogen branching enzyme</fullName>
        <shortName evidence="1">BE</shortName>
    </alternativeName>
</protein>
<proteinExistence type="inferred from homology"/>
<name>GLGB_BURVG</name>
<comment type="function">
    <text evidence="1">Catalyzes the formation of the alpha-1,6-glucosidic linkages in glycogen by scission of a 1,4-alpha-linked oligosaccharide from growing alpha-1,4-glucan chains and the subsequent attachment of the oligosaccharide to the alpha-1,6 position.</text>
</comment>
<comment type="catalytic activity">
    <reaction evidence="1">
        <text>Transfers a segment of a (1-&gt;4)-alpha-D-glucan chain to a primary hydroxy group in a similar glucan chain.</text>
        <dbReference type="EC" id="2.4.1.18"/>
    </reaction>
</comment>
<comment type="pathway">
    <text evidence="1">Glycan biosynthesis; glycogen biosynthesis.</text>
</comment>
<comment type="subunit">
    <text evidence="1">Monomer.</text>
</comment>
<comment type="similarity">
    <text evidence="1">Belongs to the glycosyl hydrolase 13 family. GlgB subfamily.</text>
</comment>
<evidence type="ECO:0000255" key="1">
    <source>
        <dbReference type="HAMAP-Rule" id="MF_00685"/>
    </source>
</evidence>
<dbReference type="EC" id="2.4.1.18" evidence="1"/>
<dbReference type="EMBL" id="CP000616">
    <property type="protein sequence ID" value="ABO58742.1"/>
    <property type="molecule type" value="Genomic_DNA"/>
</dbReference>
<dbReference type="SMR" id="A4JR39"/>
<dbReference type="CAZy" id="CBM48">
    <property type="family name" value="Carbohydrate-Binding Module Family 48"/>
</dbReference>
<dbReference type="CAZy" id="GH13">
    <property type="family name" value="Glycoside Hydrolase Family 13"/>
</dbReference>
<dbReference type="KEGG" id="bvi:Bcep1808_5812"/>
<dbReference type="eggNOG" id="COG0296">
    <property type="taxonomic scope" value="Bacteria"/>
</dbReference>
<dbReference type="HOGENOM" id="CLU_004245_3_2_4"/>
<dbReference type="UniPathway" id="UPA00164"/>
<dbReference type="Proteomes" id="UP000002287">
    <property type="component" value="Chromosome 3"/>
</dbReference>
<dbReference type="GO" id="GO:0005829">
    <property type="term" value="C:cytosol"/>
    <property type="evidence" value="ECO:0007669"/>
    <property type="project" value="TreeGrafter"/>
</dbReference>
<dbReference type="GO" id="GO:0003844">
    <property type="term" value="F:1,4-alpha-glucan branching enzyme activity"/>
    <property type="evidence" value="ECO:0007669"/>
    <property type="project" value="UniProtKB-UniRule"/>
</dbReference>
<dbReference type="GO" id="GO:0043169">
    <property type="term" value="F:cation binding"/>
    <property type="evidence" value="ECO:0007669"/>
    <property type="project" value="InterPro"/>
</dbReference>
<dbReference type="GO" id="GO:0004553">
    <property type="term" value="F:hydrolase activity, hydrolyzing O-glycosyl compounds"/>
    <property type="evidence" value="ECO:0007669"/>
    <property type="project" value="InterPro"/>
</dbReference>
<dbReference type="GO" id="GO:0005978">
    <property type="term" value="P:glycogen biosynthetic process"/>
    <property type="evidence" value="ECO:0007669"/>
    <property type="project" value="UniProtKB-UniRule"/>
</dbReference>
<dbReference type="CDD" id="cd11322">
    <property type="entry name" value="AmyAc_Glg_BE"/>
    <property type="match status" value="1"/>
</dbReference>
<dbReference type="CDD" id="cd02855">
    <property type="entry name" value="E_set_GBE_prok_N"/>
    <property type="match status" value="1"/>
</dbReference>
<dbReference type="FunFam" id="2.60.40.10:FF:000169">
    <property type="entry name" value="1,4-alpha-glucan branching enzyme GlgB"/>
    <property type="match status" value="1"/>
</dbReference>
<dbReference type="FunFam" id="2.60.40.1180:FF:000002">
    <property type="entry name" value="1,4-alpha-glucan branching enzyme GlgB"/>
    <property type="match status" value="1"/>
</dbReference>
<dbReference type="FunFam" id="3.20.20.80:FF:000003">
    <property type="entry name" value="1,4-alpha-glucan branching enzyme GlgB"/>
    <property type="match status" value="1"/>
</dbReference>
<dbReference type="Gene3D" id="3.20.20.80">
    <property type="entry name" value="Glycosidases"/>
    <property type="match status" value="1"/>
</dbReference>
<dbReference type="Gene3D" id="2.60.40.1180">
    <property type="entry name" value="Golgi alpha-mannosidase II"/>
    <property type="match status" value="1"/>
</dbReference>
<dbReference type="Gene3D" id="2.60.40.10">
    <property type="entry name" value="Immunoglobulins"/>
    <property type="match status" value="1"/>
</dbReference>
<dbReference type="HAMAP" id="MF_00685">
    <property type="entry name" value="GlgB"/>
    <property type="match status" value="1"/>
</dbReference>
<dbReference type="InterPro" id="IPR006048">
    <property type="entry name" value="A-amylase/branching_C"/>
</dbReference>
<dbReference type="InterPro" id="IPR037439">
    <property type="entry name" value="Branching_enzy"/>
</dbReference>
<dbReference type="InterPro" id="IPR006407">
    <property type="entry name" value="GlgB"/>
</dbReference>
<dbReference type="InterPro" id="IPR054169">
    <property type="entry name" value="GlgB_N"/>
</dbReference>
<dbReference type="InterPro" id="IPR044143">
    <property type="entry name" value="GlgB_N_E_set_prok"/>
</dbReference>
<dbReference type="InterPro" id="IPR006047">
    <property type="entry name" value="Glyco_hydro_13_cat_dom"/>
</dbReference>
<dbReference type="InterPro" id="IPR004193">
    <property type="entry name" value="Glyco_hydro_13_N"/>
</dbReference>
<dbReference type="InterPro" id="IPR013780">
    <property type="entry name" value="Glyco_hydro_b"/>
</dbReference>
<dbReference type="InterPro" id="IPR017853">
    <property type="entry name" value="Glycoside_hydrolase_SF"/>
</dbReference>
<dbReference type="InterPro" id="IPR013783">
    <property type="entry name" value="Ig-like_fold"/>
</dbReference>
<dbReference type="InterPro" id="IPR014756">
    <property type="entry name" value="Ig_E-set"/>
</dbReference>
<dbReference type="NCBIfam" id="TIGR01515">
    <property type="entry name" value="branching_enzym"/>
    <property type="match status" value="1"/>
</dbReference>
<dbReference type="NCBIfam" id="NF003811">
    <property type="entry name" value="PRK05402.1"/>
    <property type="match status" value="1"/>
</dbReference>
<dbReference type="NCBIfam" id="NF008967">
    <property type="entry name" value="PRK12313.1"/>
    <property type="match status" value="1"/>
</dbReference>
<dbReference type="PANTHER" id="PTHR43651">
    <property type="entry name" value="1,4-ALPHA-GLUCAN-BRANCHING ENZYME"/>
    <property type="match status" value="1"/>
</dbReference>
<dbReference type="PANTHER" id="PTHR43651:SF3">
    <property type="entry name" value="1,4-ALPHA-GLUCAN-BRANCHING ENZYME"/>
    <property type="match status" value="1"/>
</dbReference>
<dbReference type="Pfam" id="PF02806">
    <property type="entry name" value="Alpha-amylase_C"/>
    <property type="match status" value="1"/>
</dbReference>
<dbReference type="Pfam" id="PF02922">
    <property type="entry name" value="CBM_48"/>
    <property type="match status" value="1"/>
</dbReference>
<dbReference type="Pfam" id="PF22019">
    <property type="entry name" value="GlgB_N"/>
    <property type="match status" value="1"/>
</dbReference>
<dbReference type="PIRSF" id="PIRSF000463">
    <property type="entry name" value="GlgB"/>
    <property type="match status" value="1"/>
</dbReference>
<dbReference type="SMART" id="SM00642">
    <property type="entry name" value="Aamy"/>
    <property type="match status" value="1"/>
</dbReference>
<dbReference type="SUPFAM" id="SSF51445">
    <property type="entry name" value="(Trans)glycosidases"/>
    <property type="match status" value="1"/>
</dbReference>
<dbReference type="SUPFAM" id="SSF81296">
    <property type="entry name" value="E set domains"/>
    <property type="match status" value="2"/>
</dbReference>
<dbReference type="SUPFAM" id="SSF51011">
    <property type="entry name" value="Glycosyl hydrolase domain"/>
    <property type="match status" value="1"/>
</dbReference>
<feature type="chain" id="PRO_1000044973" description="1,4-alpha-glucan branching enzyme GlgB">
    <location>
        <begin position="1"/>
        <end position="733"/>
    </location>
</feature>
<feature type="active site" description="Nucleophile" evidence="1">
    <location>
        <position position="412"/>
    </location>
</feature>
<feature type="active site" description="Proton donor" evidence="1">
    <location>
        <position position="467"/>
    </location>
</feature>
<sequence length="733" mass="80466">MTDTLFDRRDIDALLGGRHPDPFACLGPHGEAGRTVVRALLPGALRVRAVTPGGDELGALACVDEAGCFAGTITHDGRYRLAIDWPDAQQVTDDAYAFGTLLDDAALARFAAGDPAAVLDCLGATPIRVDGVDGVRFAVWAPNAQRVSVVGNFNSWDGRRHPMRLRRPWGVWELFVPGIGPGEHYKYELCAADGSLLPHKADPCARATEAPPRTASVVADTAALDGFGWHDAGWIDARPDAGRRFRVPWSIYEVHAESWQRVPEEMDRSATWDELAERLIPYVKGMGFTHVEFMPISEYPFGGSWGYQPLAQFAPSARFGPVDGFARFVDRAHAAGIGVIVDWVPAHFPNDAHGLAQFDGSALYEHADPREGMHPDWNTCVFNLGRNEVSAFLIASALAWARRYHVDGIRVDAVASMLYRDYSRKEGEWVPNVYGGRENLESVAFLRTLNDALHGAAAPAGVVTIAEESTAWPGVTAPTGDGGLGFDFKWNMGWMHDTLAYLHEDPIHRRYHHDRMTFGLVYAFSERFVLPLSHDEVVHGKGSLAAKMPDDAWQRLATLRAYFGFMWAHPGKKLLFMGSEFAQWSEFAHDGTPHWDLLDAPAHRGVQRLVRDLNRAYASEPALHALDCDAAGFTWLIGDDRDNSVLAFARRDDSGRVVVAICNFTPVPRSGYRVGLPAPGQWRELMNTDAAVYGGSNAGNDGAVWAQDVPAHGQPWSATLRLPPLATLWLAPA</sequence>
<accession>A4JR39</accession>
<organism>
    <name type="scientific">Burkholderia vietnamiensis (strain G4 / LMG 22486)</name>
    <name type="common">Burkholderia cepacia (strain R1808)</name>
    <dbReference type="NCBI Taxonomy" id="269482"/>
    <lineage>
        <taxon>Bacteria</taxon>
        <taxon>Pseudomonadati</taxon>
        <taxon>Pseudomonadota</taxon>
        <taxon>Betaproteobacteria</taxon>
        <taxon>Burkholderiales</taxon>
        <taxon>Burkholderiaceae</taxon>
        <taxon>Burkholderia</taxon>
        <taxon>Burkholderia cepacia complex</taxon>
    </lineage>
</organism>